<organism>
    <name type="scientific">Alkaliphilus metalliredigens (strain QYMF)</name>
    <dbReference type="NCBI Taxonomy" id="293826"/>
    <lineage>
        <taxon>Bacteria</taxon>
        <taxon>Bacillati</taxon>
        <taxon>Bacillota</taxon>
        <taxon>Clostridia</taxon>
        <taxon>Peptostreptococcales</taxon>
        <taxon>Natronincolaceae</taxon>
        <taxon>Alkaliphilus</taxon>
    </lineage>
</organism>
<gene>
    <name evidence="1" type="primary">rpoZ</name>
    <name type="ordered locus">Amet_2789</name>
</gene>
<evidence type="ECO:0000255" key="1">
    <source>
        <dbReference type="HAMAP-Rule" id="MF_00366"/>
    </source>
</evidence>
<feature type="chain" id="PRO_1000079613" description="DNA-directed RNA polymerase subunit omega">
    <location>
        <begin position="1"/>
        <end position="68"/>
    </location>
</feature>
<proteinExistence type="inferred from homology"/>
<reference key="1">
    <citation type="journal article" date="2016" name="Genome Announc.">
        <title>Complete genome sequence of Alkaliphilus metalliredigens strain QYMF, an alkaliphilic and metal-reducing bacterium isolated from borax-contaminated leachate ponds.</title>
        <authorList>
            <person name="Hwang C."/>
            <person name="Copeland A."/>
            <person name="Lucas S."/>
            <person name="Lapidus A."/>
            <person name="Barry K."/>
            <person name="Detter J.C."/>
            <person name="Glavina Del Rio T."/>
            <person name="Hammon N."/>
            <person name="Israni S."/>
            <person name="Dalin E."/>
            <person name="Tice H."/>
            <person name="Pitluck S."/>
            <person name="Chertkov O."/>
            <person name="Brettin T."/>
            <person name="Bruce D."/>
            <person name="Han C."/>
            <person name="Schmutz J."/>
            <person name="Larimer F."/>
            <person name="Land M.L."/>
            <person name="Hauser L."/>
            <person name="Kyrpides N."/>
            <person name="Mikhailova N."/>
            <person name="Ye Q."/>
            <person name="Zhou J."/>
            <person name="Richardson P."/>
            <person name="Fields M.W."/>
        </authorList>
    </citation>
    <scope>NUCLEOTIDE SEQUENCE [LARGE SCALE GENOMIC DNA]</scope>
    <source>
        <strain>QYMF</strain>
    </source>
</reference>
<keyword id="KW-0240">DNA-directed RNA polymerase</keyword>
<keyword id="KW-0548">Nucleotidyltransferase</keyword>
<keyword id="KW-1185">Reference proteome</keyword>
<keyword id="KW-0804">Transcription</keyword>
<keyword id="KW-0808">Transferase</keyword>
<accession>A6TRX1</accession>
<dbReference type="EC" id="2.7.7.6" evidence="1"/>
<dbReference type="EMBL" id="CP000724">
    <property type="protein sequence ID" value="ABR48939.1"/>
    <property type="molecule type" value="Genomic_DNA"/>
</dbReference>
<dbReference type="RefSeq" id="WP_012063910.1">
    <property type="nucleotide sequence ID" value="NC_009633.1"/>
</dbReference>
<dbReference type="SMR" id="A6TRX1"/>
<dbReference type="STRING" id="293826.Amet_2789"/>
<dbReference type="KEGG" id="amt:Amet_2789"/>
<dbReference type="eggNOG" id="COG1758">
    <property type="taxonomic scope" value="Bacteria"/>
</dbReference>
<dbReference type="HOGENOM" id="CLU_125406_6_1_9"/>
<dbReference type="OrthoDB" id="9815459at2"/>
<dbReference type="Proteomes" id="UP000001572">
    <property type="component" value="Chromosome"/>
</dbReference>
<dbReference type="GO" id="GO:0000428">
    <property type="term" value="C:DNA-directed RNA polymerase complex"/>
    <property type="evidence" value="ECO:0007669"/>
    <property type="project" value="UniProtKB-KW"/>
</dbReference>
<dbReference type="GO" id="GO:0003677">
    <property type="term" value="F:DNA binding"/>
    <property type="evidence" value="ECO:0007669"/>
    <property type="project" value="UniProtKB-UniRule"/>
</dbReference>
<dbReference type="GO" id="GO:0003899">
    <property type="term" value="F:DNA-directed RNA polymerase activity"/>
    <property type="evidence" value="ECO:0007669"/>
    <property type="project" value="UniProtKB-UniRule"/>
</dbReference>
<dbReference type="GO" id="GO:0006351">
    <property type="term" value="P:DNA-templated transcription"/>
    <property type="evidence" value="ECO:0007669"/>
    <property type="project" value="UniProtKB-UniRule"/>
</dbReference>
<dbReference type="Gene3D" id="3.90.940.10">
    <property type="match status" value="1"/>
</dbReference>
<dbReference type="HAMAP" id="MF_00366">
    <property type="entry name" value="RNApol_bact_RpoZ"/>
    <property type="match status" value="1"/>
</dbReference>
<dbReference type="InterPro" id="IPR003716">
    <property type="entry name" value="DNA-dir_RNA_pol_omega"/>
</dbReference>
<dbReference type="InterPro" id="IPR006110">
    <property type="entry name" value="Pol_omega/Rpo6/RPB6"/>
</dbReference>
<dbReference type="InterPro" id="IPR036161">
    <property type="entry name" value="RPB6/omega-like_sf"/>
</dbReference>
<dbReference type="NCBIfam" id="TIGR00690">
    <property type="entry name" value="rpoZ"/>
    <property type="match status" value="1"/>
</dbReference>
<dbReference type="PANTHER" id="PTHR34476">
    <property type="entry name" value="DNA-DIRECTED RNA POLYMERASE SUBUNIT OMEGA"/>
    <property type="match status" value="1"/>
</dbReference>
<dbReference type="PANTHER" id="PTHR34476:SF1">
    <property type="entry name" value="DNA-DIRECTED RNA POLYMERASE SUBUNIT OMEGA"/>
    <property type="match status" value="1"/>
</dbReference>
<dbReference type="Pfam" id="PF01192">
    <property type="entry name" value="RNA_pol_Rpb6"/>
    <property type="match status" value="1"/>
</dbReference>
<dbReference type="SMART" id="SM01409">
    <property type="entry name" value="RNA_pol_Rpb6"/>
    <property type="match status" value="1"/>
</dbReference>
<dbReference type="SUPFAM" id="SSF63562">
    <property type="entry name" value="RPB6/omega subunit-like"/>
    <property type="match status" value="1"/>
</dbReference>
<sequence length="68" mass="7570">MLKPSINELLTVVDSRYSLVVATAKRARQIIDGAKIKVDSDSNKPVSTAAKEIYEGKVTYIKTDEDER</sequence>
<name>RPOZ_ALKMQ</name>
<protein>
    <recommendedName>
        <fullName evidence="1">DNA-directed RNA polymerase subunit omega</fullName>
        <shortName evidence="1">RNAP omega subunit</shortName>
        <ecNumber evidence="1">2.7.7.6</ecNumber>
    </recommendedName>
    <alternativeName>
        <fullName evidence="1">RNA polymerase omega subunit</fullName>
    </alternativeName>
    <alternativeName>
        <fullName evidence="1">Transcriptase subunit omega</fullName>
    </alternativeName>
</protein>
<comment type="function">
    <text evidence="1">Promotes RNA polymerase assembly. Latches the N- and C-terminal regions of the beta' subunit thereby facilitating its interaction with the beta and alpha subunits.</text>
</comment>
<comment type="catalytic activity">
    <reaction evidence="1">
        <text>RNA(n) + a ribonucleoside 5'-triphosphate = RNA(n+1) + diphosphate</text>
        <dbReference type="Rhea" id="RHEA:21248"/>
        <dbReference type="Rhea" id="RHEA-COMP:14527"/>
        <dbReference type="Rhea" id="RHEA-COMP:17342"/>
        <dbReference type="ChEBI" id="CHEBI:33019"/>
        <dbReference type="ChEBI" id="CHEBI:61557"/>
        <dbReference type="ChEBI" id="CHEBI:140395"/>
        <dbReference type="EC" id="2.7.7.6"/>
    </reaction>
</comment>
<comment type="subunit">
    <text evidence="1">The RNAP catalytic core consists of 2 alpha, 1 beta, 1 beta' and 1 omega subunit. When a sigma factor is associated with the core the holoenzyme is formed, which can initiate transcription.</text>
</comment>
<comment type="similarity">
    <text evidence="1">Belongs to the RNA polymerase subunit omega family.</text>
</comment>